<comment type="function">
    <text evidence="1">Binds to the 23S rRNA.</text>
</comment>
<comment type="cofactor">
    <cofactor evidence="1">
        <name>Zn(2+)</name>
        <dbReference type="ChEBI" id="CHEBI:29105"/>
    </cofactor>
    <text evidence="1">Binds 1 zinc ion per subunit.</text>
</comment>
<comment type="similarity">
    <text evidence="1">Belongs to the eukaryotic ribosomal protein eL37 family.</text>
</comment>
<feature type="chain" id="PRO_1000017767" description="Large ribosomal subunit protein eL37">
    <location>
        <begin position="1"/>
        <end position="61"/>
    </location>
</feature>
<feature type="zinc finger region" description="C4-type" evidence="1">
    <location>
        <begin position="18"/>
        <end position="36"/>
    </location>
</feature>
<feature type="binding site" evidence="1">
    <location>
        <position position="18"/>
    </location>
    <ligand>
        <name>Zn(2+)</name>
        <dbReference type="ChEBI" id="CHEBI:29105"/>
    </ligand>
</feature>
<feature type="binding site" evidence="1">
    <location>
        <position position="21"/>
    </location>
    <ligand>
        <name>Zn(2+)</name>
        <dbReference type="ChEBI" id="CHEBI:29105"/>
    </ligand>
</feature>
<feature type="binding site" evidence="1">
    <location>
        <position position="33"/>
    </location>
    <ligand>
        <name>Zn(2+)</name>
        <dbReference type="ChEBI" id="CHEBI:29105"/>
    </ligand>
</feature>
<feature type="binding site" evidence="1">
    <location>
        <position position="36"/>
    </location>
    <ligand>
        <name>Zn(2+)</name>
        <dbReference type="ChEBI" id="CHEBI:29105"/>
    </ligand>
</feature>
<evidence type="ECO:0000255" key="1">
    <source>
        <dbReference type="HAMAP-Rule" id="MF_00547"/>
    </source>
</evidence>
<evidence type="ECO:0000305" key="2"/>
<sequence>MKGTPSFGKRNKKNHIRCRRCGRNAYNPTKKYCASCGFGRSKRLRRYSWQNKKPVTGKRLK</sequence>
<dbReference type="EMBL" id="CP000102">
    <property type="protein sequence ID" value="ABC57555.1"/>
    <property type="molecule type" value="Genomic_DNA"/>
</dbReference>
<dbReference type="RefSeq" id="WP_011406754.1">
    <property type="nucleotide sequence ID" value="NC_007681.1"/>
</dbReference>
<dbReference type="SMR" id="Q2NF48"/>
<dbReference type="STRING" id="339860.Msp_1174"/>
<dbReference type="KEGG" id="mst:Msp_1174"/>
<dbReference type="eggNOG" id="arCOG04126">
    <property type="taxonomic scope" value="Archaea"/>
</dbReference>
<dbReference type="HOGENOM" id="CLU_208825_0_0_2"/>
<dbReference type="OrthoDB" id="5619at2157"/>
<dbReference type="Proteomes" id="UP000001931">
    <property type="component" value="Chromosome"/>
</dbReference>
<dbReference type="GO" id="GO:0022625">
    <property type="term" value="C:cytosolic large ribosomal subunit"/>
    <property type="evidence" value="ECO:0007669"/>
    <property type="project" value="TreeGrafter"/>
</dbReference>
<dbReference type="GO" id="GO:0019843">
    <property type="term" value="F:rRNA binding"/>
    <property type="evidence" value="ECO:0007669"/>
    <property type="project" value="UniProtKB-KW"/>
</dbReference>
<dbReference type="GO" id="GO:0003735">
    <property type="term" value="F:structural constituent of ribosome"/>
    <property type="evidence" value="ECO:0007669"/>
    <property type="project" value="InterPro"/>
</dbReference>
<dbReference type="GO" id="GO:0008270">
    <property type="term" value="F:zinc ion binding"/>
    <property type="evidence" value="ECO:0007669"/>
    <property type="project" value="UniProtKB-UniRule"/>
</dbReference>
<dbReference type="GO" id="GO:0006412">
    <property type="term" value="P:translation"/>
    <property type="evidence" value="ECO:0007669"/>
    <property type="project" value="UniProtKB-UniRule"/>
</dbReference>
<dbReference type="FunFam" id="2.20.25.30:FF:000003">
    <property type="entry name" value="50S ribosomal protein L37e"/>
    <property type="match status" value="1"/>
</dbReference>
<dbReference type="Gene3D" id="2.20.25.30">
    <property type="match status" value="1"/>
</dbReference>
<dbReference type="HAMAP" id="MF_00547">
    <property type="entry name" value="Ribosomal_eL37"/>
    <property type="match status" value="1"/>
</dbReference>
<dbReference type="InterPro" id="IPR001569">
    <property type="entry name" value="Ribosomal_eL37"/>
</dbReference>
<dbReference type="InterPro" id="IPR011331">
    <property type="entry name" value="Ribosomal_eL37/eL43"/>
</dbReference>
<dbReference type="InterPro" id="IPR018267">
    <property type="entry name" value="Ribosomal_eL37_CS"/>
</dbReference>
<dbReference type="InterPro" id="IPR011332">
    <property type="entry name" value="Ribosomal_zn-bd"/>
</dbReference>
<dbReference type="NCBIfam" id="NF003214">
    <property type="entry name" value="PRK04179.1"/>
    <property type="match status" value="1"/>
</dbReference>
<dbReference type="PANTHER" id="PTHR10768">
    <property type="entry name" value="60S RIBOSOMAL PROTEIN L37"/>
    <property type="match status" value="1"/>
</dbReference>
<dbReference type="PANTHER" id="PTHR10768:SF0">
    <property type="entry name" value="RIBOSOMAL PROTEIN L37"/>
    <property type="match status" value="1"/>
</dbReference>
<dbReference type="Pfam" id="PF01907">
    <property type="entry name" value="Ribosomal_L37e"/>
    <property type="match status" value="1"/>
</dbReference>
<dbReference type="SUPFAM" id="SSF57829">
    <property type="entry name" value="Zn-binding ribosomal proteins"/>
    <property type="match status" value="1"/>
</dbReference>
<dbReference type="PROSITE" id="PS01077">
    <property type="entry name" value="RIBOSOMAL_L37E"/>
    <property type="match status" value="1"/>
</dbReference>
<proteinExistence type="inferred from homology"/>
<keyword id="KW-0479">Metal-binding</keyword>
<keyword id="KW-1185">Reference proteome</keyword>
<keyword id="KW-0687">Ribonucleoprotein</keyword>
<keyword id="KW-0689">Ribosomal protein</keyword>
<keyword id="KW-0694">RNA-binding</keyword>
<keyword id="KW-0699">rRNA-binding</keyword>
<keyword id="KW-0862">Zinc</keyword>
<keyword id="KW-0863">Zinc-finger</keyword>
<organism>
    <name type="scientific">Methanosphaera stadtmanae (strain ATCC 43021 / DSM 3091 / JCM 11832 / MCB-3)</name>
    <dbReference type="NCBI Taxonomy" id="339860"/>
    <lineage>
        <taxon>Archaea</taxon>
        <taxon>Methanobacteriati</taxon>
        <taxon>Methanobacteriota</taxon>
        <taxon>Methanomada group</taxon>
        <taxon>Methanobacteria</taxon>
        <taxon>Methanobacteriales</taxon>
        <taxon>Methanobacteriaceae</taxon>
        <taxon>Methanosphaera</taxon>
    </lineage>
</organism>
<name>RL37_METST</name>
<reference key="1">
    <citation type="journal article" date="2006" name="J. Bacteriol.">
        <title>The genome sequence of Methanosphaera stadtmanae reveals why this human intestinal archaeon is restricted to methanol and H2 for methane formation and ATP synthesis.</title>
        <authorList>
            <person name="Fricke W.F."/>
            <person name="Seedorf H."/>
            <person name="Henne A."/>
            <person name="Kruer M."/>
            <person name="Liesegang H."/>
            <person name="Hedderich R."/>
            <person name="Gottschalk G."/>
            <person name="Thauer R.K."/>
        </authorList>
    </citation>
    <scope>NUCLEOTIDE SEQUENCE [LARGE SCALE GENOMIC DNA]</scope>
    <source>
        <strain>ATCC 43021 / DSM 3091 / JCM 11832 / MCB-3</strain>
    </source>
</reference>
<accession>Q2NF48</accession>
<gene>
    <name evidence="1" type="primary">rpl37e</name>
    <name type="ordered locus">Msp_1174</name>
</gene>
<protein>
    <recommendedName>
        <fullName evidence="1">Large ribosomal subunit protein eL37</fullName>
    </recommendedName>
    <alternativeName>
        <fullName evidence="2">50S ribosomal protein L37e</fullName>
    </alternativeName>
</protein>